<keyword id="KW-0256">Endoplasmic reticulum</keyword>
<keyword id="KW-0443">Lipid metabolism</keyword>
<keyword id="KW-0472">Membrane</keyword>
<keyword id="KW-0521">NADP</keyword>
<keyword id="KW-0560">Oxidoreductase</keyword>
<keyword id="KW-1185">Reference proteome</keyword>
<keyword id="KW-0812">Transmembrane</keyword>
<keyword id="KW-1133">Transmembrane helix</keyword>
<gene>
    <name type="primary">srd5a3</name>
</gene>
<dbReference type="EC" id="1.3.1.94" evidence="1"/>
<dbReference type="EC" id="1.3.1.22" evidence="1"/>
<dbReference type="EMBL" id="BC042255">
    <property type="protein sequence ID" value="AAH42255.1"/>
    <property type="molecule type" value="mRNA"/>
</dbReference>
<dbReference type="RefSeq" id="NP_001079436.1">
    <property type="nucleotide sequence ID" value="NM_001085967.1"/>
</dbReference>
<dbReference type="DNASU" id="379123"/>
<dbReference type="GeneID" id="379123"/>
<dbReference type="KEGG" id="xla:379123"/>
<dbReference type="AGR" id="Xenbase:XB-GENE-985517"/>
<dbReference type="CTD" id="379123"/>
<dbReference type="Xenbase" id="XB-GENE-985517">
    <property type="gene designation" value="srd5a3.S"/>
</dbReference>
<dbReference type="OrthoDB" id="541710at2759"/>
<dbReference type="UniPathway" id="UPA00378"/>
<dbReference type="Proteomes" id="UP000186698">
    <property type="component" value="Chromosome 1S"/>
</dbReference>
<dbReference type="Bgee" id="379123">
    <property type="expression patterns" value="Expressed in oocyte and 19 other cell types or tissues"/>
</dbReference>
<dbReference type="GO" id="GO:0005783">
    <property type="term" value="C:endoplasmic reticulum"/>
    <property type="evidence" value="ECO:0000250"/>
    <property type="project" value="UniProtKB"/>
</dbReference>
<dbReference type="GO" id="GO:0005789">
    <property type="term" value="C:endoplasmic reticulum membrane"/>
    <property type="evidence" value="ECO:0007669"/>
    <property type="project" value="UniProtKB-SubCell"/>
</dbReference>
<dbReference type="GO" id="GO:0047751">
    <property type="term" value="F:3-oxo-5-alpha-steroid 4-dehydrogenase (NADP+) activity"/>
    <property type="evidence" value="ECO:0000250"/>
    <property type="project" value="UniProtKB"/>
</dbReference>
<dbReference type="GO" id="GO:0016628">
    <property type="term" value="F:oxidoreductase activity, acting on the CH-CH group of donors, NAD or NADP as acceptor"/>
    <property type="evidence" value="ECO:0000250"/>
    <property type="project" value="UniProtKB"/>
</dbReference>
<dbReference type="GO" id="GO:0160198">
    <property type="term" value="F:polyprenal reductase activity"/>
    <property type="evidence" value="ECO:0000250"/>
    <property type="project" value="UniProtKB"/>
</dbReference>
<dbReference type="GO" id="GO:0102389">
    <property type="term" value="F:polyprenol reductase activity"/>
    <property type="evidence" value="ECO:0000318"/>
    <property type="project" value="GO_Central"/>
</dbReference>
<dbReference type="GO" id="GO:0019408">
    <property type="term" value="P:dolichol biosynthetic process"/>
    <property type="evidence" value="ECO:0000250"/>
    <property type="project" value="UniProtKB"/>
</dbReference>
<dbReference type="GO" id="GO:0019348">
    <property type="term" value="P:dolichol metabolic process"/>
    <property type="evidence" value="ECO:0000250"/>
    <property type="project" value="UniProtKB"/>
</dbReference>
<dbReference type="GO" id="GO:0006488">
    <property type="term" value="P:dolichol-linked oligosaccharide biosynthetic process"/>
    <property type="evidence" value="ECO:0000250"/>
    <property type="project" value="UniProtKB"/>
</dbReference>
<dbReference type="GO" id="GO:0016095">
    <property type="term" value="P:polyprenol catabolic process"/>
    <property type="evidence" value="ECO:0000250"/>
    <property type="project" value="UniProtKB"/>
</dbReference>
<dbReference type="InterPro" id="IPR001104">
    <property type="entry name" value="3-oxo-5_a-steroid_4-DH_C"/>
</dbReference>
<dbReference type="InterPro" id="IPR039698">
    <property type="entry name" value="Dfg10/SRD5A3"/>
</dbReference>
<dbReference type="PANTHER" id="PTHR14624">
    <property type="entry name" value="DFG10 PROTEIN"/>
    <property type="match status" value="1"/>
</dbReference>
<dbReference type="PANTHER" id="PTHR14624:SF0">
    <property type="entry name" value="POLYPRENOL REDUCTASE"/>
    <property type="match status" value="1"/>
</dbReference>
<dbReference type="Pfam" id="PF02544">
    <property type="entry name" value="Steroid_dh"/>
    <property type="match status" value="1"/>
</dbReference>
<dbReference type="PROSITE" id="PS50244">
    <property type="entry name" value="S5A_REDUCTASE"/>
    <property type="match status" value="1"/>
</dbReference>
<protein>
    <recommendedName>
        <fullName evidence="3">Polyprenal reductase</fullName>
        <ecNumber evidence="1">1.3.1.94</ecNumber>
    </recommendedName>
    <alternativeName>
        <fullName>3-oxo-5-alpha-steroid 4-dehydrogenase 3</fullName>
        <ecNumber evidence="1">1.3.1.22</ecNumber>
    </alternativeName>
    <alternativeName>
        <fullName>Steroid 5-alpha-reductase 3</fullName>
        <shortName>S5AR 3</shortName>
        <shortName>SR type 3</shortName>
    </alternativeName>
</protein>
<name>SR5A3_XENLA</name>
<proteinExistence type="evidence at transcript level"/>
<accession>Q8AVI9</accession>
<evidence type="ECO:0000250" key="1">
    <source>
        <dbReference type="UniProtKB" id="Q9H8P0"/>
    </source>
</evidence>
<evidence type="ECO:0000255" key="2"/>
<evidence type="ECO:0000305" key="3"/>
<sequence length="319" mass="36591">MQLVQLLPPGVSLLALVWLAVDAAFLTALLLYLQRGCDSGRSLLCSVFQDLIRYGKTKSGLRRPSWLQWFDIPKRCFWHFYFVSLVWNGFLLWILLHLLLQSVPVPEWLQAVLQFLCAGSEPQVLGGELSVVLAFSLLWLHSLRRLLECLFVSIFSNGVIHFVQYCFGLGYYILIGFTILGYCPLDRRTAVSLDDLLMQGNWYHILGLTLYVWASLHQYTCHCILADLRKSASGAIINLKHAVPTGDWFEKVSCPHYFAELLIYLSIAVVFGLLNTIWWLVVLYVLLSQALAAVLCHEFYHEKFDSYPIHRKAFIPLIF</sequence>
<organism>
    <name type="scientific">Xenopus laevis</name>
    <name type="common">African clawed frog</name>
    <dbReference type="NCBI Taxonomy" id="8355"/>
    <lineage>
        <taxon>Eukaryota</taxon>
        <taxon>Metazoa</taxon>
        <taxon>Chordata</taxon>
        <taxon>Craniata</taxon>
        <taxon>Vertebrata</taxon>
        <taxon>Euteleostomi</taxon>
        <taxon>Amphibia</taxon>
        <taxon>Batrachia</taxon>
        <taxon>Anura</taxon>
        <taxon>Pipoidea</taxon>
        <taxon>Pipidae</taxon>
        <taxon>Xenopodinae</taxon>
        <taxon>Xenopus</taxon>
        <taxon>Xenopus</taxon>
    </lineage>
</organism>
<feature type="chain" id="PRO_0000317705" description="Polyprenal reductase">
    <location>
        <begin position="1"/>
        <end position="319"/>
    </location>
</feature>
<feature type="topological domain" description="Cytoplasmic" evidence="2">
    <location>
        <begin position="1"/>
        <end position="12"/>
    </location>
</feature>
<feature type="transmembrane region" description="Helical" evidence="2">
    <location>
        <begin position="13"/>
        <end position="33"/>
    </location>
</feature>
<feature type="topological domain" description="Lumenal" evidence="2">
    <location>
        <begin position="34"/>
        <end position="79"/>
    </location>
</feature>
<feature type="transmembrane region" description="Helical" evidence="2">
    <location>
        <begin position="80"/>
        <end position="100"/>
    </location>
</feature>
<feature type="topological domain" description="Cytoplasmic" evidence="2">
    <location>
        <begin position="101"/>
        <end position="122"/>
    </location>
</feature>
<feature type="transmembrane region" description="Helical" evidence="2">
    <location>
        <begin position="123"/>
        <end position="143"/>
    </location>
</feature>
<feature type="topological domain" description="Lumenal" evidence="2">
    <location>
        <begin position="144"/>
        <end position="158"/>
    </location>
</feature>
<feature type="transmembrane region" description="Helical" evidence="2">
    <location>
        <begin position="159"/>
        <end position="179"/>
    </location>
</feature>
<feature type="topological domain" description="Cytoplasmic" evidence="2">
    <location>
        <begin position="180"/>
        <end position="195"/>
    </location>
</feature>
<feature type="transmembrane region" description="Helical" evidence="2">
    <location>
        <begin position="196"/>
        <end position="216"/>
    </location>
</feature>
<feature type="topological domain" description="Lumenal" evidence="2">
    <location>
        <begin position="217"/>
        <end position="266"/>
    </location>
</feature>
<feature type="transmembrane region" description="Helical" evidence="2">
    <location>
        <begin position="267"/>
        <end position="287"/>
    </location>
</feature>
<feature type="topological domain" description="Cytoplasmic" evidence="2">
    <location>
        <begin position="288"/>
        <end position="319"/>
    </location>
</feature>
<comment type="function">
    <text evidence="1">Plays a key role in early steps of protein N-linked glycosylation by being involved in the conversion of polyprenol into dolichol (By similarity). Acts as a polyprenal reductase that mediates the reduction of polyprenal into dolichal in a NADP-dependent mechanism (By similarity). Dolichols are required for the synthesis of dolichol-linked monosaccharides and the oligosaccharide precursor used for N-glycosylation (By similarity). Also able to convert testosterone (T) into 5-alpha-dihydrotestosterone (DHT) (By similarity).</text>
</comment>
<comment type="catalytic activity">
    <reaction evidence="1">
        <text>a di-trans,poly-cis-dolichal + NADP(+) = a di-trans,poly-cis-polyprenal + NADPH + H(+)</text>
        <dbReference type="Rhea" id="RHEA:80727"/>
        <dbReference type="Rhea" id="RHEA-COMP:19536"/>
        <dbReference type="Rhea" id="RHEA-COMP:19537"/>
        <dbReference type="ChEBI" id="CHEBI:15378"/>
        <dbReference type="ChEBI" id="CHEBI:57783"/>
        <dbReference type="ChEBI" id="CHEBI:58349"/>
        <dbReference type="ChEBI" id="CHEBI:231623"/>
        <dbReference type="ChEBI" id="CHEBI:231637"/>
        <dbReference type="EC" id="1.3.1.94"/>
    </reaction>
    <physiologicalReaction direction="right-to-left" evidence="1">
        <dbReference type="Rhea" id="RHEA:80729"/>
    </physiologicalReaction>
</comment>
<comment type="catalytic activity">
    <reaction evidence="1">
        <text>a 3-oxo-5alpha-steroid + NADP(+) = a 3-oxo-Delta(4)-steroid + NADPH + H(+)</text>
        <dbReference type="Rhea" id="RHEA:54384"/>
        <dbReference type="ChEBI" id="CHEBI:13601"/>
        <dbReference type="ChEBI" id="CHEBI:15378"/>
        <dbReference type="ChEBI" id="CHEBI:47909"/>
        <dbReference type="ChEBI" id="CHEBI:57783"/>
        <dbReference type="ChEBI" id="CHEBI:58349"/>
        <dbReference type="EC" id="1.3.1.22"/>
    </reaction>
    <physiologicalReaction direction="right-to-left" evidence="1">
        <dbReference type="Rhea" id="RHEA:54386"/>
    </physiologicalReaction>
</comment>
<comment type="catalytic activity">
    <reaction evidence="1">
        <text>androst-4-ene-3,17-dione + NADPH + H(+) = 5alpha-androstan-3,17-dione + NADP(+)</text>
        <dbReference type="Rhea" id="RHEA:50816"/>
        <dbReference type="ChEBI" id="CHEBI:15378"/>
        <dbReference type="ChEBI" id="CHEBI:15994"/>
        <dbReference type="ChEBI" id="CHEBI:16422"/>
        <dbReference type="ChEBI" id="CHEBI:57783"/>
        <dbReference type="ChEBI" id="CHEBI:58349"/>
    </reaction>
    <physiologicalReaction direction="right-to-left" evidence="1">
        <dbReference type="Rhea" id="RHEA:50818"/>
    </physiologicalReaction>
</comment>
<comment type="catalytic activity">
    <reaction evidence="1">
        <text>17beta-hydroxy-5alpha-androstan-3-one + NADP(+) = testosterone + NADPH + H(+)</text>
        <dbReference type="Rhea" id="RHEA:50820"/>
        <dbReference type="ChEBI" id="CHEBI:15378"/>
        <dbReference type="ChEBI" id="CHEBI:16330"/>
        <dbReference type="ChEBI" id="CHEBI:17347"/>
        <dbReference type="ChEBI" id="CHEBI:57783"/>
        <dbReference type="ChEBI" id="CHEBI:58349"/>
        <dbReference type="EC" id="1.3.1.22"/>
    </reaction>
    <physiologicalReaction direction="right-to-left" evidence="1">
        <dbReference type="Rhea" id="RHEA:50822"/>
    </physiologicalReaction>
</comment>
<comment type="pathway">
    <text evidence="1">Protein modification; protein glycosylation.</text>
</comment>
<comment type="subcellular location">
    <subcellularLocation>
        <location evidence="1">Endoplasmic reticulum membrane</location>
        <topology evidence="1">Multi-pass membrane protein</topology>
    </subcellularLocation>
</comment>
<comment type="similarity">
    <text evidence="3">Belongs to the steroid 5-alpha reductase family. Polyprenal reductase subfamily.</text>
</comment>
<reference key="1">
    <citation type="submission" date="2003-01" db="EMBL/GenBank/DDBJ databases">
        <authorList>
            <consortium name="NIH - Xenopus Gene Collection (XGC) project"/>
        </authorList>
    </citation>
    <scope>NUCLEOTIDE SEQUENCE [LARGE SCALE MRNA]</scope>
    <source>
        <tissue>Embryo</tissue>
    </source>
</reference>